<keyword id="KW-0547">Nucleotide-binding</keyword>
<keyword id="KW-0548">Nucleotidyltransferase</keyword>
<keyword id="KW-1185">Reference proteome</keyword>
<keyword id="KW-0696">RNA-directed RNA polymerase</keyword>
<keyword id="KW-0808">Transferase</keyword>
<keyword id="KW-0693">Viral RNA replication</keyword>
<proteinExistence type="predicted"/>
<organismHost>
    <name type="scientific">Atkinsonella hypoxylon</name>
    <dbReference type="NCBI Taxonomy" id="47741"/>
</organismHost>
<feature type="chain" id="PRO_0000402792" description="RNA-directed RNA polymerase">
    <location>
        <begin position="1"/>
        <end position="665"/>
    </location>
</feature>
<evidence type="ECO:0000305" key="1"/>
<dbReference type="EC" id="2.7.7.48"/>
<dbReference type="EMBL" id="L39125">
    <property type="protein sequence ID" value="AAA61829.1"/>
    <property type="molecule type" value="Genomic_RNA"/>
</dbReference>
<dbReference type="RefSeq" id="NP_604475.1">
    <property type="nucleotide sequence ID" value="NC_003470.1"/>
</dbReference>
<dbReference type="GeneID" id="991189"/>
<dbReference type="KEGG" id="vg:991189"/>
<dbReference type="Proteomes" id="UP000001673">
    <property type="component" value="Genome"/>
</dbReference>
<dbReference type="GO" id="GO:0000166">
    <property type="term" value="F:nucleotide binding"/>
    <property type="evidence" value="ECO:0007669"/>
    <property type="project" value="UniProtKB-KW"/>
</dbReference>
<dbReference type="GO" id="GO:0003723">
    <property type="term" value="F:RNA binding"/>
    <property type="evidence" value="ECO:0007669"/>
    <property type="project" value="InterPro"/>
</dbReference>
<dbReference type="GO" id="GO:0003968">
    <property type="term" value="F:RNA-directed RNA polymerase activity"/>
    <property type="evidence" value="ECO:0007669"/>
    <property type="project" value="UniProtKB-KW"/>
</dbReference>
<dbReference type="GO" id="GO:0006351">
    <property type="term" value="P:DNA-templated transcription"/>
    <property type="evidence" value="ECO:0007669"/>
    <property type="project" value="InterPro"/>
</dbReference>
<dbReference type="InterPro" id="IPR043502">
    <property type="entry name" value="DNA/RNA_pol_sf"/>
</dbReference>
<dbReference type="InterPro" id="IPR001205">
    <property type="entry name" value="RNA-dir_pol_C"/>
</dbReference>
<dbReference type="Pfam" id="PF00680">
    <property type="entry name" value="RdRP_1"/>
    <property type="match status" value="1"/>
</dbReference>
<dbReference type="SUPFAM" id="SSF56672">
    <property type="entry name" value="DNA/RNA polymerases"/>
    <property type="match status" value="1"/>
</dbReference>
<organism>
    <name type="scientific">Atkinsonella hypoxylon virus (isolate 2H)</name>
    <name type="common">AhV</name>
    <dbReference type="NCBI Taxonomy" id="647331"/>
    <lineage>
        <taxon>Viruses</taxon>
        <taxon>Riboviria</taxon>
        <taxon>Orthornavirae</taxon>
        <taxon>Pisuviricota</taxon>
        <taxon>Duplopiviricetes</taxon>
        <taxon>Durnavirales</taxon>
        <taxon>Partitiviridae</taxon>
        <taxon>Betapartitivirus</taxon>
        <taxon>Atkinsonella hypoxylon virus</taxon>
    </lineage>
</organism>
<name>RDRP_AHV2H</name>
<reference key="1">
    <citation type="journal article" date="1995" name="J. Gen. Virol.">
        <title>Genome organization of a partitivirus from the filamentous ascomycete Atkinsonella hypoxylon.</title>
        <authorList>
            <person name="Oh C.S."/>
            <person name="Hillman B.I."/>
        </authorList>
    </citation>
    <scope>NUCLEOTIDE SEQUENCE [GENOMIC RNA]</scope>
</reference>
<comment type="function">
    <text evidence="1">RNA-dependent RNA polymerase which replicates the viral genome.</text>
</comment>
<comment type="catalytic activity">
    <reaction>
        <text>RNA(n) + a ribonucleoside 5'-triphosphate = RNA(n+1) + diphosphate</text>
        <dbReference type="Rhea" id="RHEA:21248"/>
        <dbReference type="Rhea" id="RHEA-COMP:14527"/>
        <dbReference type="Rhea" id="RHEA-COMP:17342"/>
        <dbReference type="ChEBI" id="CHEBI:33019"/>
        <dbReference type="ChEBI" id="CHEBI:61557"/>
        <dbReference type="ChEBI" id="CHEBI:140395"/>
        <dbReference type="EC" id="2.7.7.48"/>
    </reaction>
</comment>
<sequence>MSTLLIPQDTIAHTFDEAVASESNLRIDEVPENYLERFIHPSEPENFEFYSLRDSDIPSKRIPKNGIQVFENLKYHTNSKDNLYKDQPSSGPSPMRGVANIIREYFPQYLDDLRTWCRPKSSDDSIFNDFNHEQRITQPFTEERERRLLPLIDHFLGIKPYDIVHYCDTRFYPWKLSTRADYFHNHSRDRKAHAAKSHPDFATGPTKKSYFINSHLFFDRSTVHNIKEYGFPFRPTTDSARNETLLDLWFKKVPTELLVRSHISKRDNLKVRPVYNAPMIYIRIECMLFYPLLAQARKRDCCIMYGLETIRGGMNELERISNAFNSFLLIDWSRFDHLAPFTISNFFFKKWLPTKILIDHGYAQISNYHDHVHSFSAQAQSHGIPMISKEYQTPPEATVFAKKVLNLISFLERWYRDMVFVTPDGFAYRRTHAGVPSGILMTQFIDSFVNLTILLDGLIEFGFTDEEIKQLLVFIMGDDNVIFTPWTLLKLIEFFDWFAKYTLDRFGMVINISKSAVTSIRRKIEVLGYTNNYGFPTRSISKLVGQLAYPERHVTDADMCMRAIGFAYASCAQSETFHALCKKVFQYYFAKTSINERLILKGRKAELPGMFFAYPDVSEHIRLDHFPSLSEVRILLSKFQGYLKETPFGTIPTFSTPQTLRDQTQ</sequence>
<protein>
    <recommendedName>
        <fullName>RNA-directed RNA polymerase</fullName>
        <ecNumber>2.7.7.48</ecNumber>
    </recommendedName>
</protein>
<accession>Q85055</accession>